<accession>A1AXD2</accession>
<gene>
    <name evidence="1" type="primary">greA</name>
    <name type="ordered locus">Rmag_0874</name>
</gene>
<comment type="function">
    <text evidence="1">Necessary for efficient RNA polymerase transcription elongation past template-encoded arresting sites. The arresting sites in DNA have the property of trapping a certain fraction of elongating RNA polymerases that pass through, resulting in locked ternary complexes. Cleavage of the nascent transcript by cleavage factors such as GreA or GreB allows the resumption of elongation from the new 3'terminus. GreA releases sequences of 2 to 3 nucleotides.</text>
</comment>
<comment type="similarity">
    <text evidence="1">Belongs to the GreA/GreB family.</text>
</comment>
<sequence length="158" mass="17510">MENIPMTVFGAKVLEAELLKLKNVSRPRIIENIVTARAHGDLKENAEYHAAKEEQGFIEGRIKEVESKLSRMQVIDVTKLNQDGRCVFGTTITLMNIEDDSETTYKIVGEDEADIILGKISCHSPIASALMGNEEGDEVTVKAPKGDIVYEVLSVEYI</sequence>
<keyword id="KW-0238">DNA-binding</keyword>
<keyword id="KW-0804">Transcription</keyword>
<keyword id="KW-0805">Transcription regulation</keyword>
<evidence type="ECO:0000255" key="1">
    <source>
        <dbReference type="HAMAP-Rule" id="MF_00105"/>
    </source>
</evidence>
<dbReference type="EMBL" id="CP000488">
    <property type="protein sequence ID" value="ABL02589.1"/>
    <property type="molecule type" value="Genomic_DNA"/>
</dbReference>
<dbReference type="RefSeq" id="WP_011738214.1">
    <property type="nucleotide sequence ID" value="NC_008610.1"/>
</dbReference>
<dbReference type="SMR" id="A1AXD2"/>
<dbReference type="STRING" id="413404.Rmag_0874"/>
<dbReference type="KEGG" id="rma:Rmag_0874"/>
<dbReference type="eggNOG" id="COG0782">
    <property type="taxonomic scope" value="Bacteria"/>
</dbReference>
<dbReference type="HOGENOM" id="CLU_101379_2_0_6"/>
<dbReference type="OrthoDB" id="9808774at2"/>
<dbReference type="Proteomes" id="UP000002587">
    <property type="component" value="Chromosome"/>
</dbReference>
<dbReference type="GO" id="GO:0003677">
    <property type="term" value="F:DNA binding"/>
    <property type="evidence" value="ECO:0007669"/>
    <property type="project" value="UniProtKB-UniRule"/>
</dbReference>
<dbReference type="GO" id="GO:0070063">
    <property type="term" value="F:RNA polymerase binding"/>
    <property type="evidence" value="ECO:0007669"/>
    <property type="project" value="InterPro"/>
</dbReference>
<dbReference type="GO" id="GO:0006354">
    <property type="term" value="P:DNA-templated transcription elongation"/>
    <property type="evidence" value="ECO:0007669"/>
    <property type="project" value="TreeGrafter"/>
</dbReference>
<dbReference type="GO" id="GO:0032784">
    <property type="term" value="P:regulation of DNA-templated transcription elongation"/>
    <property type="evidence" value="ECO:0007669"/>
    <property type="project" value="UniProtKB-UniRule"/>
</dbReference>
<dbReference type="FunFam" id="1.10.287.180:FF:000001">
    <property type="entry name" value="Transcription elongation factor GreA"/>
    <property type="match status" value="1"/>
</dbReference>
<dbReference type="FunFam" id="3.10.50.30:FF:000001">
    <property type="entry name" value="Transcription elongation factor GreA"/>
    <property type="match status" value="1"/>
</dbReference>
<dbReference type="Gene3D" id="3.10.50.30">
    <property type="entry name" value="Transcription elongation factor, GreA/GreB, C-terminal domain"/>
    <property type="match status" value="1"/>
</dbReference>
<dbReference type="Gene3D" id="1.10.287.180">
    <property type="entry name" value="Transcription elongation factor, GreA/GreB, N-terminal domain"/>
    <property type="match status" value="1"/>
</dbReference>
<dbReference type="HAMAP" id="MF_00105">
    <property type="entry name" value="GreA_GreB"/>
    <property type="match status" value="1"/>
</dbReference>
<dbReference type="InterPro" id="IPR036953">
    <property type="entry name" value="GreA/GreB_C_sf"/>
</dbReference>
<dbReference type="InterPro" id="IPR018151">
    <property type="entry name" value="TF_GreA/GreB_CS"/>
</dbReference>
<dbReference type="InterPro" id="IPR006359">
    <property type="entry name" value="Tscrpt_elong_fac_GreA"/>
</dbReference>
<dbReference type="InterPro" id="IPR028624">
    <property type="entry name" value="Tscrpt_elong_fac_GreA/B"/>
</dbReference>
<dbReference type="InterPro" id="IPR001437">
    <property type="entry name" value="Tscrpt_elong_fac_GreA/B_C"/>
</dbReference>
<dbReference type="InterPro" id="IPR023459">
    <property type="entry name" value="Tscrpt_elong_fac_GreA/B_fam"/>
</dbReference>
<dbReference type="InterPro" id="IPR022691">
    <property type="entry name" value="Tscrpt_elong_fac_GreA/B_N"/>
</dbReference>
<dbReference type="InterPro" id="IPR036805">
    <property type="entry name" value="Tscrpt_elong_fac_GreA/B_N_sf"/>
</dbReference>
<dbReference type="NCBIfam" id="TIGR01462">
    <property type="entry name" value="greA"/>
    <property type="match status" value="1"/>
</dbReference>
<dbReference type="NCBIfam" id="NF001261">
    <property type="entry name" value="PRK00226.1-2"/>
    <property type="match status" value="1"/>
</dbReference>
<dbReference type="NCBIfam" id="NF001263">
    <property type="entry name" value="PRK00226.1-4"/>
    <property type="match status" value="1"/>
</dbReference>
<dbReference type="NCBIfam" id="NF001264">
    <property type="entry name" value="PRK00226.1-5"/>
    <property type="match status" value="1"/>
</dbReference>
<dbReference type="PANTHER" id="PTHR30437">
    <property type="entry name" value="TRANSCRIPTION ELONGATION FACTOR GREA"/>
    <property type="match status" value="1"/>
</dbReference>
<dbReference type="PANTHER" id="PTHR30437:SF4">
    <property type="entry name" value="TRANSCRIPTION ELONGATION FACTOR GREA"/>
    <property type="match status" value="1"/>
</dbReference>
<dbReference type="Pfam" id="PF01272">
    <property type="entry name" value="GreA_GreB"/>
    <property type="match status" value="1"/>
</dbReference>
<dbReference type="Pfam" id="PF03449">
    <property type="entry name" value="GreA_GreB_N"/>
    <property type="match status" value="1"/>
</dbReference>
<dbReference type="PIRSF" id="PIRSF006092">
    <property type="entry name" value="GreA_GreB"/>
    <property type="match status" value="1"/>
</dbReference>
<dbReference type="SUPFAM" id="SSF54534">
    <property type="entry name" value="FKBP-like"/>
    <property type="match status" value="1"/>
</dbReference>
<dbReference type="SUPFAM" id="SSF46557">
    <property type="entry name" value="GreA transcript cleavage protein, N-terminal domain"/>
    <property type="match status" value="1"/>
</dbReference>
<dbReference type="PROSITE" id="PS00829">
    <property type="entry name" value="GREAB_1"/>
    <property type="match status" value="1"/>
</dbReference>
<name>GREA_RUTMC</name>
<feature type="chain" id="PRO_1000075888" description="Transcription elongation factor GreA">
    <location>
        <begin position="1"/>
        <end position="158"/>
    </location>
</feature>
<reference key="1">
    <citation type="journal article" date="2007" name="Science">
        <title>The Calyptogena magnifica chemoautotrophic symbiont genome.</title>
        <authorList>
            <person name="Newton I.L.G."/>
            <person name="Woyke T."/>
            <person name="Auchtung T.A."/>
            <person name="Dilly G.F."/>
            <person name="Dutton R.J."/>
            <person name="Fisher M.C."/>
            <person name="Fontanez K.M."/>
            <person name="Lau E."/>
            <person name="Stewart F.J."/>
            <person name="Richardson P.M."/>
            <person name="Barry K.W."/>
            <person name="Saunders E."/>
            <person name="Detter J.C."/>
            <person name="Wu D."/>
            <person name="Eisen J.A."/>
            <person name="Cavanaugh C.M."/>
        </authorList>
    </citation>
    <scope>NUCLEOTIDE SEQUENCE [LARGE SCALE GENOMIC DNA]</scope>
</reference>
<organism>
    <name type="scientific">Ruthia magnifica subsp. Calyptogena magnifica</name>
    <dbReference type="NCBI Taxonomy" id="413404"/>
    <lineage>
        <taxon>Bacteria</taxon>
        <taxon>Pseudomonadati</taxon>
        <taxon>Pseudomonadota</taxon>
        <taxon>Gammaproteobacteria</taxon>
        <taxon>Candidatus Pseudothioglobaceae</taxon>
        <taxon>Candidatus Ruthturnera</taxon>
    </lineage>
</organism>
<proteinExistence type="inferred from homology"/>
<protein>
    <recommendedName>
        <fullName evidence="1">Transcription elongation factor GreA</fullName>
    </recommendedName>
    <alternativeName>
        <fullName evidence="1">Transcript cleavage factor GreA</fullName>
    </alternativeName>
</protein>